<comment type="cofactor">
    <cofactor evidence="1">
        <name>Zn(2+)</name>
        <dbReference type="ChEBI" id="CHEBI:29105"/>
    </cofactor>
    <text evidence="1">Binds 1 zinc ion per subunit.</text>
</comment>
<comment type="subcellular location">
    <subcellularLocation>
        <location evidence="1">Cell membrane</location>
        <topology evidence="1">Multi-pass membrane protein</topology>
    </subcellularLocation>
</comment>
<comment type="similarity">
    <text evidence="1">Belongs to the peptidase M48B family.</text>
</comment>
<evidence type="ECO:0000255" key="1">
    <source>
        <dbReference type="HAMAP-Rule" id="MF_00188"/>
    </source>
</evidence>
<gene>
    <name evidence="1" type="primary">htpX1</name>
    <name type="ordered locus">Saci_0871</name>
</gene>
<keyword id="KW-1003">Cell membrane</keyword>
<keyword id="KW-0378">Hydrolase</keyword>
<keyword id="KW-0472">Membrane</keyword>
<keyword id="KW-0479">Metal-binding</keyword>
<keyword id="KW-0482">Metalloprotease</keyword>
<keyword id="KW-0645">Protease</keyword>
<keyword id="KW-1185">Reference proteome</keyword>
<keyword id="KW-0812">Transmembrane</keyword>
<keyword id="KW-1133">Transmembrane helix</keyword>
<keyword id="KW-0862">Zinc</keyword>
<sequence>MNVGRKLKTLMFLSGTLTIIAEGIITYLIVSIIGIPTIFTAIFLVILWLIQWLIAPYLVGRNTEEVGPGDPLYEIVRKIAMESKVPTPRVFISYEEYPNAFAFGNYITGKRVAVTKPLLDILNQDELEAVLAHEVGHIKHLDVEIGMALGLIPTIIGYVGNFLLFTGWTLLFFAGDEVELILGLAMLAIGGVLFVLTFLLQIFVLWFNRLRESFADFHSATLYKDKAPYLATALAKIQIYAQNIRTDPFTGIIITAPPIKLKENERDAEELVMKWLHEHISPFADILMTHPHPAKRVKMLYSILQGT</sequence>
<accession>Q4JAE2</accession>
<name>HTPX1_SULAC</name>
<protein>
    <recommendedName>
        <fullName evidence="1">Protease HtpX homolog 1</fullName>
        <ecNumber evidence="1">3.4.24.-</ecNumber>
    </recommendedName>
</protein>
<proteinExistence type="inferred from homology"/>
<reference key="1">
    <citation type="journal article" date="2005" name="J. Bacteriol.">
        <title>The genome of Sulfolobus acidocaldarius, a model organism of the Crenarchaeota.</title>
        <authorList>
            <person name="Chen L."/>
            <person name="Bruegger K."/>
            <person name="Skovgaard M."/>
            <person name="Redder P."/>
            <person name="She Q."/>
            <person name="Torarinsson E."/>
            <person name="Greve B."/>
            <person name="Awayez M."/>
            <person name="Zibat A."/>
            <person name="Klenk H.-P."/>
            <person name="Garrett R.A."/>
        </authorList>
    </citation>
    <scope>NUCLEOTIDE SEQUENCE [LARGE SCALE GENOMIC DNA]</scope>
    <source>
        <strain>ATCC 33909 / DSM 639 / JCM 8929 / NBRC 15157 / NCIMB 11770</strain>
    </source>
</reference>
<dbReference type="EC" id="3.4.24.-" evidence="1"/>
<dbReference type="EMBL" id="CP000077">
    <property type="protein sequence ID" value="AAY80237.1"/>
    <property type="molecule type" value="Genomic_DNA"/>
</dbReference>
<dbReference type="RefSeq" id="WP_011277739.1">
    <property type="nucleotide sequence ID" value="NC_007181.1"/>
</dbReference>
<dbReference type="STRING" id="330779.Saci_0871"/>
<dbReference type="GeneID" id="14551385"/>
<dbReference type="KEGG" id="sai:Saci_0871"/>
<dbReference type="PATRIC" id="fig|330779.12.peg.834"/>
<dbReference type="eggNOG" id="arCOG01331">
    <property type="taxonomic scope" value="Archaea"/>
</dbReference>
<dbReference type="HOGENOM" id="CLU_042266_4_1_2"/>
<dbReference type="Proteomes" id="UP000001018">
    <property type="component" value="Chromosome"/>
</dbReference>
<dbReference type="GO" id="GO:0005886">
    <property type="term" value="C:plasma membrane"/>
    <property type="evidence" value="ECO:0007669"/>
    <property type="project" value="UniProtKB-SubCell"/>
</dbReference>
<dbReference type="GO" id="GO:0004222">
    <property type="term" value="F:metalloendopeptidase activity"/>
    <property type="evidence" value="ECO:0007669"/>
    <property type="project" value="UniProtKB-UniRule"/>
</dbReference>
<dbReference type="GO" id="GO:0008270">
    <property type="term" value="F:zinc ion binding"/>
    <property type="evidence" value="ECO:0007669"/>
    <property type="project" value="UniProtKB-UniRule"/>
</dbReference>
<dbReference type="GO" id="GO:0006508">
    <property type="term" value="P:proteolysis"/>
    <property type="evidence" value="ECO:0007669"/>
    <property type="project" value="UniProtKB-KW"/>
</dbReference>
<dbReference type="CDD" id="cd07338">
    <property type="entry name" value="M48B_HtpX_like"/>
    <property type="match status" value="1"/>
</dbReference>
<dbReference type="Gene3D" id="3.30.2010.10">
    <property type="entry name" value="Metalloproteases ('zincins'), catalytic domain"/>
    <property type="match status" value="1"/>
</dbReference>
<dbReference type="HAMAP" id="MF_00188">
    <property type="entry name" value="Pept_M48_protease_HtpX"/>
    <property type="match status" value="1"/>
</dbReference>
<dbReference type="InterPro" id="IPR050083">
    <property type="entry name" value="HtpX_protease"/>
</dbReference>
<dbReference type="InterPro" id="IPR022919">
    <property type="entry name" value="Pept_M48_protease_HtpX"/>
</dbReference>
<dbReference type="InterPro" id="IPR001915">
    <property type="entry name" value="Peptidase_M48"/>
</dbReference>
<dbReference type="PANTHER" id="PTHR43221">
    <property type="entry name" value="PROTEASE HTPX"/>
    <property type="match status" value="1"/>
</dbReference>
<dbReference type="PANTHER" id="PTHR43221:SF2">
    <property type="entry name" value="PROTEASE HTPX HOMOLOG"/>
    <property type="match status" value="1"/>
</dbReference>
<dbReference type="Pfam" id="PF01435">
    <property type="entry name" value="Peptidase_M48"/>
    <property type="match status" value="1"/>
</dbReference>
<organism>
    <name type="scientific">Sulfolobus acidocaldarius (strain ATCC 33909 / DSM 639 / JCM 8929 / NBRC 15157 / NCIMB 11770)</name>
    <dbReference type="NCBI Taxonomy" id="330779"/>
    <lineage>
        <taxon>Archaea</taxon>
        <taxon>Thermoproteota</taxon>
        <taxon>Thermoprotei</taxon>
        <taxon>Sulfolobales</taxon>
        <taxon>Sulfolobaceae</taxon>
        <taxon>Sulfolobus</taxon>
    </lineage>
</organism>
<feature type="chain" id="PRO_0000138928" description="Protease HtpX homolog 1">
    <location>
        <begin position="1"/>
        <end position="307"/>
    </location>
</feature>
<feature type="transmembrane region" description="Helical" evidence="1">
    <location>
        <begin position="7"/>
        <end position="27"/>
    </location>
</feature>
<feature type="transmembrane region" description="Helical" evidence="1">
    <location>
        <begin position="38"/>
        <end position="60"/>
    </location>
</feature>
<feature type="transmembrane region" description="Helical" evidence="1">
    <location>
        <begin position="145"/>
        <end position="165"/>
    </location>
</feature>
<feature type="transmembrane region" description="Helical" evidence="1">
    <location>
        <begin position="180"/>
        <end position="200"/>
    </location>
</feature>
<feature type="active site" evidence="1">
    <location>
        <position position="134"/>
    </location>
</feature>
<feature type="binding site" evidence="1">
    <location>
        <position position="133"/>
    </location>
    <ligand>
        <name>Zn(2+)</name>
        <dbReference type="ChEBI" id="CHEBI:29105"/>
        <note>catalytic</note>
    </ligand>
</feature>
<feature type="binding site" evidence="1">
    <location>
        <position position="137"/>
    </location>
    <ligand>
        <name>Zn(2+)</name>
        <dbReference type="ChEBI" id="CHEBI:29105"/>
        <note>catalytic</note>
    </ligand>
</feature>
<feature type="binding site" evidence="1">
    <location>
        <position position="212"/>
    </location>
    <ligand>
        <name>Zn(2+)</name>
        <dbReference type="ChEBI" id="CHEBI:29105"/>
        <note>catalytic</note>
    </ligand>
</feature>